<sequence length="258" mass="26987">MMNPLVIKLGGVLLDSEEALERLFTALVTYREKHERPLVIMHGGGCLVDELMKRLALPVVKKNGLRVTPADQIDIITGALAGTANKTLLAWAVKHQINAVGLCLADGNTVTVTLLDAELGHVGKAQPGSAALVQTLLAAGYMPIISSIGITVEGQLMNVNADQAATALAATLGADLILLSDVSGILDGKGQRIAEMTAQKAEQLIAQGIITDGMVVKVNAALDAARSLGRPVDIASWRHSEQLPALFNGVPIGTRISV</sequence>
<name>ARGB_YERPA</name>
<reference key="1">
    <citation type="journal article" date="2006" name="J. Bacteriol.">
        <title>Complete genome sequence of Yersinia pestis strains Antiqua and Nepal516: evidence of gene reduction in an emerging pathogen.</title>
        <authorList>
            <person name="Chain P.S.G."/>
            <person name="Hu P."/>
            <person name="Malfatti S.A."/>
            <person name="Radnedge L."/>
            <person name="Larimer F."/>
            <person name="Vergez L.M."/>
            <person name="Worsham P."/>
            <person name="Chu M.C."/>
            <person name="Andersen G.L."/>
        </authorList>
    </citation>
    <scope>NUCLEOTIDE SEQUENCE [LARGE SCALE GENOMIC DNA]</scope>
    <source>
        <strain>Antiqua</strain>
    </source>
</reference>
<organism>
    <name type="scientific">Yersinia pestis bv. Antiqua (strain Antiqua)</name>
    <dbReference type="NCBI Taxonomy" id="360102"/>
    <lineage>
        <taxon>Bacteria</taxon>
        <taxon>Pseudomonadati</taxon>
        <taxon>Pseudomonadota</taxon>
        <taxon>Gammaproteobacteria</taxon>
        <taxon>Enterobacterales</taxon>
        <taxon>Yersiniaceae</taxon>
        <taxon>Yersinia</taxon>
    </lineage>
</organism>
<keyword id="KW-0028">Amino-acid biosynthesis</keyword>
<keyword id="KW-0055">Arginine biosynthesis</keyword>
<keyword id="KW-0067">ATP-binding</keyword>
<keyword id="KW-0963">Cytoplasm</keyword>
<keyword id="KW-0418">Kinase</keyword>
<keyword id="KW-0547">Nucleotide-binding</keyword>
<keyword id="KW-0808">Transferase</keyword>
<feature type="chain" id="PRO_0000264785" description="Acetylglutamate kinase">
    <location>
        <begin position="1"/>
        <end position="258"/>
    </location>
</feature>
<feature type="binding site" evidence="1">
    <location>
        <begin position="44"/>
        <end position="45"/>
    </location>
    <ligand>
        <name>substrate</name>
    </ligand>
</feature>
<feature type="binding site" evidence="1">
    <location>
        <position position="66"/>
    </location>
    <ligand>
        <name>substrate</name>
    </ligand>
</feature>
<feature type="binding site" evidence="1">
    <location>
        <position position="158"/>
    </location>
    <ligand>
        <name>substrate</name>
    </ligand>
</feature>
<feature type="binding site" evidence="1">
    <location>
        <begin position="181"/>
        <end position="186"/>
    </location>
    <ligand>
        <name>ATP</name>
        <dbReference type="ChEBI" id="CHEBI:30616"/>
    </ligand>
</feature>
<feature type="binding site" evidence="1">
    <location>
        <begin position="209"/>
        <end position="211"/>
    </location>
    <ligand>
        <name>ATP</name>
        <dbReference type="ChEBI" id="CHEBI:30616"/>
    </ligand>
</feature>
<feature type="site" description="Transition state stabilizer" evidence="1">
    <location>
        <position position="8"/>
    </location>
</feature>
<feature type="site" description="Transition state stabilizer" evidence="1">
    <location>
        <position position="217"/>
    </location>
</feature>
<gene>
    <name evidence="1" type="primary">argB</name>
    <name type="ordered locus">YPA_0098</name>
</gene>
<proteinExistence type="inferred from homology"/>
<comment type="function">
    <text evidence="1">Catalyzes the ATP-dependent phosphorylation of N-acetyl-L-glutamate.</text>
</comment>
<comment type="catalytic activity">
    <reaction evidence="1">
        <text>N-acetyl-L-glutamate + ATP = N-acetyl-L-glutamyl 5-phosphate + ADP</text>
        <dbReference type="Rhea" id="RHEA:14629"/>
        <dbReference type="ChEBI" id="CHEBI:30616"/>
        <dbReference type="ChEBI" id="CHEBI:44337"/>
        <dbReference type="ChEBI" id="CHEBI:57936"/>
        <dbReference type="ChEBI" id="CHEBI:456216"/>
        <dbReference type="EC" id="2.7.2.8"/>
    </reaction>
</comment>
<comment type="pathway">
    <text evidence="1">Amino-acid biosynthesis; L-arginine biosynthesis; N(2)-acetyl-L-ornithine from L-glutamate: step 2/4.</text>
</comment>
<comment type="subunit">
    <text evidence="1">Homodimer.</text>
</comment>
<comment type="subcellular location">
    <subcellularLocation>
        <location evidence="1">Cytoplasm</location>
    </subcellularLocation>
</comment>
<comment type="similarity">
    <text evidence="1">Belongs to the acetylglutamate kinase family. ArgB subfamily.</text>
</comment>
<dbReference type="EC" id="2.7.2.8" evidence="1"/>
<dbReference type="EMBL" id="CP000308">
    <property type="protein sequence ID" value="ABG12067.1"/>
    <property type="molecule type" value="Genomic_DNA"/>
</dbReference>
<dbReference type="SMR" id="Q1CBV5"/>
<dbReference type="KEGG" id="ypa:YPA_0098"/>
<dbReference type="UniPathway" id="UPA00068">
    <property type="reaction ID" value="UER00107"/>
</dbReference>
<dbReference type="Proteomes" id="UP000001971">
    <property type="component" value="Chromosome"/>
</dbReference>
<dbReference type="GO" id="GO:0005737">
    <property type="term" value="C:cytoplasm"/>
    <property type="evidence" value="ECO:0007669"/>
    <property type="project" value="UniProtKB-SubCell"/>
</dbReference>
<dbReference type="GO" id="GO:0003991">
    <property type="term" value="F:acetylglutamate kinase activity"/>
    <property type="evidence" value="ECO:0007669"/>
    <property type="project" value="UniProtKB-UniRule"/>
</dbReference>
<dbReference type="GO" id="GO:0005524">
    <property type="term" value="F:ATP binding"/>
    <property type="evidence" value="ECO:0007669"/>
    <property type="project" value="UniProtKB-UniRule"/>
</dbReference>
<dbReference type="GO" id="GO:0042450">
    <property type="term" value="P:arginine biosynthetic process via ornithine"/>
    <property type="evidence" value="ECO:0007669"/>
    <property type="project" value="UniProtKB-UniRule"/>
</dbReference>
<dbReference type="GO" id="GO:0006526">
    <property type="term" value="P:L-arginine biosynthetic process"/>
    <property type="evidence" value="ECO:0007669"/>
    <property type="project" value="UniProtKB-UniPathway"/>
</dbReference>
<dbReference type="CDD" id="cd04249">
    <property type="entry name" value="AAK_NAGK-NC"/>
    <property type="match status" value="1"/>
</dbReference>
<dbReference type="FunFam" id="3.40.1160.10:FF:000008">
    <property type="entry name" value="Acetylglutamate kinase"/>
    <property type="match status" value="1"/>
</dbReference>
<dbReference type="Gene3D" id="3.40.1160.10">
    <property type="entry name" value="Acetylglutamate kinase-like"/>
    <property type="match status" value="1"/>
</dbReference>
<dbReference type="HAMAP" id="MF_00082">
    <property type="entry name" value="ArgB"/>
    <property type="match status" value="1"/>
</dbReference>
<dbReference type="InterPro" id="IPR036393">
    <property type="entry name" value="AceGlu_kinase-like_sf"/>
</dbReference>
<dbReference type="InterPro" id="IPR004662">
    <property type="entry name" value="AcgluKinase_fam"/>
</dbReference>
<dbReference type="InterPro" id="IPR037528">
    <property type="entry name" value="ArgB"/>
</dbReference>
<dbReference type="InterPro" id="IPR001048">
    <property type="entry name" value="Asp/Glu/Uridylate_kinase"/>
</dbReference>
<dbReference type="InterPro" id="IPR041731">
    <property type="entry name" value="NAGK-NC"/>
</dbReference>
<dbReference type="NCBIfam" id="TIGR00761">
    <property type="entry name" value="argB"/>
    <property type="match status" value="1"/>
</dbReference>
<dbReference type="PANTHER" id="PTHR23342">
    <property type="entry name" value="N-ACETYLGLUTAMATE SYNTHASE"/>
    <property type="match status" value="1"/>
</dbReference>
<dbReference type="PANTHER" id="PTHR23342:SF0">
    <property type="entry name" value="N-ACETYLGLUTAMATE SYNTHASE, MITOCHONDRIAL"/>
    <property type="match status" value="1"/>
</dbReference>
<dbReference type="Pfam" id="PF00696">
    <property type="entry name" value="AA_kinase"/>
    <property type="match status" value="1"/>
</dbReference>
<dbReference type="PIRSF" id="PIRSF000728">
    <property type="entry name" value="NAGK"/>
    <property type="match status" value="1"/>
</dbReference>
<dbReference type="SUPFAM" id="SSF53633">
    <property type="entry name" value="Carbamate kinase-like"/>
    <property type="match status" value="1"/>
</dbReference>
<protein>
    <recommendedName>
        <fullName evidence="1">Acetylglutamate kinase</fullName>
        <ecNumber evidence="1">2.7.2.8</ecNumber>
    </recommendedName>
    <alternativeName>
        <fullName evidence="1">N-acetyl-L-glutamate 5-phosphotransferase</fullName>
    </alternativeName>
    <alternativeName>
        <fullName evidence="1">NAG kinase</fullName>
        <shortName evidence="1">NAGK</shortName>
    </alternativeName>
</protein>
<accession>Q1CBV5</accession>
<evidence type="ECO:0000255" key="1">
    <source>
        <dbReference type="HAMAP-Rule" id="MF_00082"/>
    </source>
</evidence>